<gene>
    <name type="ordered locus">PM1775</name>
</gene>
<accession>Q9CK59</accession>
<proteinExistence type="predicted"/>
<feature type="chain" id="PRO_0000216332" description="Uncharacterized protein PM1775">
    <location>
        <begin position="1"/>
        <end position="92"/>
    </location>
</feature>
<protein>
    <recommendedName>
        <fullName>Uncharacterized protein PM1775</fullName>
    </recommendedName>
</protein>
<name>Y1775_PASMU</name>
<keyword id="KW-1185">Reference proteome</keyword>
<reference key="1">
    <citation type="journal article" date="2001" name="Proc. Natl. Acad. Sci. U.S.A.">
        <title>Complete genomic sequence of Pasteurella multocida Pm70.</title>
        <authorList>
            <person name="May B.J."/>
            <person name="Zhang Q."/>
            <person name="Li L.L."/>
            <person name="Paustian M.L."/>
            <person name="Whittam T.S."/>
            <person name="Kapur V."/>
        </authorList>
    </citation>
    <scope>NUCLEOTIDE SEQUENCE [LARGE SCALE GENOMIC DNA]</scope>
    <source>
        <strain>Pm70</strain>
    </source>
</reference>
<sequence>MLDTNPPAESQYKPTYADILAQLNDIQESLEIAIDKGYPTIKAEGVPDIRMSDKDYLEWALERINCLIYDVENIQEKLAQLLQINCDTNCEL</sequence>
<dbReference type="EMBL" id="AE004439">
    <property type="protein sequence ID" value="AAK03859.1"/>
    <property type="molecule type" value="Genomic_DNA"/>
</dbReference>
<dbReference type="RefSeq" id="WP_010907328.1">
    <property type="nucleotide sequence ID" value="NC_002663.1"/>
</dbReference>
<dbReference type="SMR" id="Q9CK59"/>
<dbReference type="STRING" id="272843.PM1775"/>
<dbReference type="EnsemblBacteria" id="AAK03859">
    <property type="protein sequence ID" value="AAK03859"/>
    <property type="gene ID" value="PM1775"/>
</dbReference>
<dbReference type="KEGG" id="pmu:PM1775"/>
<dbReference type="PATRIC" id="fig|272843.6.peg.1798"/>
<dbReference type="HOGENOM" id="CLU_2410609_0_0_6"/>
<dbReference type="OrthoDB" id="5681099at2"/>
<dbReference type="Proteomes" id="UP000000809">
    <property type="component" value="Chromosome"/>
</dbReference>
<organism>
    <name type="scientific">Pasteurella multocida (strain Pm70)</name>
    <dbReference type="NCBI Taxonomy" id="272843"/>
    <lineage>
        <taxon>Bacteria</taxon>
        <taxon>Pseudomonadati</taxon>
        <taxon>Pseudomonadota</taxon>
        <taxon>Gammaproteobacteria</taxon>
        <taxon>Pasteurellales</taxon>
        <taxon>Pasteurellaceae</taxon>
        <taxon>Pasteurella</taxon>
    </lineage>
</organism>